<feature type="chain" id="PRO_0000390365" description="Protein M2-1">
    <location>
        <begin position="1"/>
        <end position="184"/>
    </location>
</feature>
<feature type="zinc finger region" description="C3H1-type" evidence="3">
    <location>
        <begin position="1"/>
        <end position="28"/>
    </location>
</feature>
<feature type="region of interest" description="Oligomerization" evidence="1">
    <location>
        <begin position="32"/>
        <end position="49"/>
    </location>
</feature>
<feature type="region of interest" description="Globular core" evidence="1">
    <location>
        <begin position="75"/>
        <end position="167"/>
    </location>
</feature>
<feature type="site" description="Involved in RNA-binding" evidence="1">
    <location>
        <position position="8"/>
    </location>
</feature>
<feature type="site" description="Involved in RNA-binding" evidence="1">
    <location>
        <position position="23"/>
    </location>
</feature>
<feature type="site" description="Involved in RNA-binding" evidence="1">
    <location>
        <position position="91"/>
    </location>
</feature>
<feature type="site" description="Involved in RNA-binding" evidence="1">
    <location>
        <position position="149"/>
    </location>
</feature>
<feature type="modified residue" description="Phosphoserine; by host" evidence="2">
    <location>
        <position position="57"/>
    </location>
</feature>
<feature type="modified residue" description="Phosphoserine; by host" evidence="2">
    <location>
        <position position="60"/>
    </location>
</feature>
<name>M21_AMPV1</name>
<accession>Q2Y2M2</accession>
<reference key="1">
    <citation type="journal article" date="2004" name="Avian Dis.">
        <title>Evidence of avian pneumovirus spread beyond Minnesota among wild and domestic birds in central North America.</title>
        <authorList>
            <person name="Bennett R.S."/>
            <person name="Nezworski J."/>
            <person name="Velayudhan B.T."/>
            <person name="Nagaraja K.V."/>
            <person name="Zeman D.H."/>
            <person name="Dyer N."/>
            <person name="Graham T."/>
            <person name="Lauer D.C."/>
            <person name="Njenga M.K."/>
            <person name="Halvorson D.A."/>
        </authorList>
    </citation>
    <scope>NUCLEOTIDE SEQUENCE [GENOMIC RNA]</scope>
</reference>
<reference key="2">
    <citation type="journal article" date="2005" name="J. Virol.">
        <title>A wild goose metapneumovirus containing a large attachment glycoprotein is avirulent but immunoprotective in domestic turkeys.</title>
        <authorList>
            <person name="Bennett R.S."/>
            <person name="LaRue R."/>
            <person name="Shaw D."/>
            <person name="Yu Q."/>
            <person name="Nagaraja K.V."/>
            <person name="Halvorson D.A."/>
            <person name="Njenga M.K."/>
        </authorList>
    </citation>
    <scope>NUCLEOTIDE SEQUENCE [GENOMIC RNA]</scope>
</reference>
<organismHost>
    <name type="scientific">Anser sp.</name>
    <name type="common">goose</name>
    <dbReference type="NCBI Taxonomy" id="8847"/>
</organismHost>
<organismHost>
    <name type="scientific">Meleagris gallopavo</name>
    <name type="common">Wild turkey</name>
    <dbReference type="NCBI Taxonomy" id="9103"/>
</organismHost>
<dbReference type="EMBL" id="DQ009484">
    <property type="protein sequence ID" value="AAY81658.1"/>
    <property type="molecule type" value="Viral_cRNA"/>
</dbReference>
<dbReference type="RefSeq" id="YP_443841.1">
    <property type="nucleotide sequence ID" value="NC_007652.1"/>
</dbReference>
<dbReference type="SMR" id="Q2Y2M2"/>
<dbReference type="Proteomes" id="UP000002471">
    <property type="component" value="Segment"/>
</dbReference>
<dbReference type="GO" id="GO:0030430">
    <property type="term" value="C:host cell cytoplasm"/>
    <property type="evidence" value="ECO:0007669"/>
    <property type="project" value="UniProtKB-SubCell"/>
</dbReference>
<dbReference type="GO" id="GO:0042025">
    <property type="term" value="C:host cell nucleus"/>
    <property type="evidence" value="ECO:0007669"/>
    <property type="project" value="UniProtKB-SubCell"/>
</dbReference>
<dbReference type="GO" id="GO:0044423">
    <property type="term" value="C:virion component"/>
    <property type="evidence" value="ECO:0007669"/>
    <property type="project" value="UniProtKB-KW"/>
</dbReference>
<dbReference type="GO" id="GO:0003723">
    <property type="term" value="F:RNA binding"/>
    <property type="evidence" value="ECO:0007669"/>
    <property type="project" value="UniProtKB-KW"/>
</dbReference>
<dbReference type="GO" id="GO:0005198">
    <property type="term" value="F:structural molecule activity"/>
    <property type="evidence" value="ECO:0007669"/>
    <property type="project" value="InterPro"/>
</dbReference>
<dbReference type="GO" id="GO:0008270">
    <property type="term" value="F:zinc ion binding"/>
    <property type="evidence" value="ECO:0007669"/>
    <property type="project" value="UniProtKB-KW"/>
</dbReference>
<dbReference type="GO" id="GO:0046782">
    <property type="term" value="P:regulation of viral transcription"/>
    <property type="evidence" value="ECO:0007669"/>
    <property type="project" value="InterPro"/>
</dbReference>
<dbReference type="Gene3D" id="1.20.120.1350">
    <property type="entry name" value="Pneumovirus matrix protein 2 (M2), zinc-binding domain"/>
    <property type="match status" value="1"/>
</dbReference>
<dbReference type="InterPro" id="IPR009452">
    <property type="entry name" value="Pneumovirus_M2-1"/>
</dbReference>
<dbReference type="InterPro" id="IPR000571">
    <property type="entry name" value="Znf_CCCH"/>
</dbReference>
<dbReference type="InterPro" id="IPR036855">
    <property type="entry name" value="Znf_CCCH_sf"/>
</dbReference>
<dbReference type="Pfam" id="PF06436">
    <property type="entry name" value="Pneumovirus_M2"/>
    <property type="match status" value="1"/>
</dbReference>
<dbReference type="Pfam" id="PF00642">
    <property type="entry name" value="zf-CCCH"/>
    <property type="match status" value="1"/>
</dbReference>
<dbReference type="PIRSF" id="PIRSF003913">
    <property type="entry name" value="Matrix_glycop-M2_paramyxo"/>
    <property type="match status" value="1"/>
</dbReference>
<dbReference type="SMART" id="SM00356">
    <property type="entry name" value="ZnF_C3H1"/>
    <property type="match status" value="1"/>
</dbReference>
<dbReference type="SUPFAM" id="SSF90229">
    <property type="entry name" value="CCCH zinc finger"/>
    <property type="match status" value="1"/>
</dbReference>
<dbReference type="PROSITE" id="PS50103">
    <property type="entry name" value="ZF_C3H1"/>
    <property type="match status" value="1"/>
</dbReference>
<protein>
    <recommendedName>
        <fullName>Protein M2-1</fullName>
    </recommendedName>
    <alternativeName>
        <fullName>Envelope-associated 22 kDa protein</fullName>
    </alternativeName>
</protein>
<sequence>MSRKAPCKYEVRGKCNRGSECKFNHNYWSWPDRYLLLRSNYLLNQLLRNTDRSDGLSLISGAGRDDRTQDFVLGSTNVVQNYIDNNENITKASACYSLYNIIKQLQETDVRQARDNKVDDSKHVALHNLVLSYMEMSKTPASLINNLKKPPKEKLKKLAKLIIELSAGVENDSTAAMQDSANSD</sequence>
<evidence type="ECO:0000250" key="1">
    <source>
        <dbReference type="UniProtKB" id="P04545"/>
    </source>
</evidence>
<evidence type="ECO:0000250" key="2">
    <source>
        <dbReference type="UniProtKB" id="Q6WB97"/>
    </source>
</evidence>
<evidence type="ECO:0000255" key="3">
    <source>
        <dbReference type="PROSITE-ProRule" id="PRU00723"/>
    </source>
</evidence>
<evidence type="ECO:0000305" key="4"/>
<comment type="function">
    <text evidence="1 2">Essential for viral replication in vivo (By similarity). Plays a role in the association of the matrix protein with the nucleocapsid, which initiates assembly and budding (By similarity).</text>
</comment>
<comment type="subunit">
    <text evidence="1">Homotetramer. The homotetramer interacts with RNA. Interacts with the phosphoprotein (P); this interaction is required for protein M2-1 function, localization in host inclusion bodies. Interacts with the nucleoprotein (N). Interacts with the matrix protein (M); this interaction directs M localization to cytoplasmic inclusions comprising viral proteins L, N, P, and M2-1 and mediates M association with the nucleocapsid.</text>
</comment>
<comment type="subcellular location">
    <subcellularLocation>
        <location evidence="1">Virion</location>
    </subcellularLocation>
    <subcellularLocation>
        <location evidence="1">Host cytoplasm</location>
    </subcellularLocation>
    <subcellularLocation>
        <location evidence="1">Host nucleus</location>
    </subcellularLocation>
    <text evidence="1">Localizes in cytoplasmic inclusion bodies substructures called inclusion bodies associated granules (IBAGs). Forms a layer between the matrix and nucleocapsid.</text>
</comment>
<comment type="domain">
    <text evidence="1 2">Contains a zinc-finger domain on its N-terminus essential for its function (By similarity). Contains an oligomerization domain. The central globular core is responsible for binding to RNA and phosphoprotein (By similarity).</text>
</comment>
<comment type="PTM">
    <text evidence="2">Phosphorylated by host in infected cells. Phosphorylation is not essential for zinc binding activity and oligomerization, but zinc binding activity is necessary for the phosphorylation and oligomerization. Phosphorylation up-regulates viral RNA synthesis, replication, and pathogenesis in vivo.</text>
</comment>
<comment type="similarity">
    <text evidence="4">Belongs to the pneumoviridae M2-1 protein family.</text>
</comment>
<proteinExistence type="inferred from homology"/>
<gene>
    <name type="primary">M2-1</name>
</gene>
<organism>
    <name type="scientific">Avian metapneumovirus (isolate Canada goose/Minnesota/15a/2001)</name>
    <name type="common">AMPV</name>
    <dbReference type="NCBI Taxonomy" id="652954"/>
    <lineage>
        <taxon>Viruses</taxon>
        <taxon>Riboviria</taxon>
        <taxon>Orthornavirae</taxon>
        <taxon>Negarnaviricota</taxon>
        <taxon>Haploviricotina</taxon>
        <taxon>Monjiviricetes</taxon>
        <taxon>Mononegavirales</taxon>
        <taxon>Pneumoviridae</taxon>
        <taxon>Metapneumovirus</taxon>
        <taxon>Metapneumovirus avis</taxon>
    </lineage>
</organism>
<keyword id="KW-1035">Host cytoplasm</keyword>
<keyword id="KW-1048">Host nucleus</keyword>
<keyword id="KW-0479">Metal-binding</keyword>
<keyword id="KW-0597">Phosphoprotein</keyword>
<keyword id="KW-1185">Reference proteome</keyword>
<keyword id="KW-0694">RNA-binding</keyword>
<keyword id="KW-0946">Virion</keyword>
<keyword id="KW-0862">Zinc</keyword>
<keyword id="KW-0863">Zinc-finger</keyword>